<proteinExistence type="inferred from homology"/>
<keyword id="KW-0004">4Fe-4S</keyword>
<keyword id="KW-0067">ATP-binding</keyword>
<keyword id="KW-0227">DNA damage</keyword>
<keyword id="KW-0234">DNA repair</keyword>
<keyword id="KW-0238">DNA-binding</keyword>
<keyword id="KW-0347">Helicase</keyword>
<keyword id="KW-0378">Hydrolase</keyword>
<keyword id="KW-0408">Iron</keyword>
<keyword id="KW-0411">Iron-sulfur</keyword>
<keyword id="KW-0413">Isomerase</keyword>
<keyword id="KW-0479">Metal-binding</keyword>
<keyword id="KW-0547">Nucleotide-binding</keyword>
<keyword id="KW-0539">Nucleus</keyword>
<keyword id="KW-1185">Reference proteome</keyword>
<gene>
    <name type="ORF">GF20802</name>
</gene>
<name>RTEL1_DROAN</name>
<sequence length="994" mass="110230">MPESLIAGIPVHFPFEPYPVQRAYMEKVIQCLKDGTNGVLESPTGTGKTLSLLCSSLAWIRTRQSEHQQQMIKLDKGADLLGGGAGGGPELSDLAKTMGKANNWGVPKVIYASRTHSQLTQAMRELKRTAYSNMRSVVLGSRDQLCIHPEVSREVGNSNKVNMCKLRVHSKTCTFQLRVESKKDHPDFRGPSIMDIEDLIKVGQKLKMCPYYASKELVPQADITFMPYNYLLDPKARKANKIELGNTIVILDEAHNIEKICEESASVQIKSSDVAIAIEDVTHIMKAFASDSPQDMAGDEPKDFTIDDLMLLKEMLLDLEKAIDAVAVDNPIDGATYPASMIYELLGKANFTYGNVATIVALLDKLVQYLMVASQQQMSLRKGGSFTLLSDLLTIVFANKESVMGKVHASFKVHVQVEESKQPQGKQAPAKQAGGWLSKASLTNGSTGKVAKIINFWCFNPGFGMEQLLNTQVRSVILTSGTLAPLKPLIAELAIPVAQHLENPHIVDQSQVYVKIIGTGPDRQPLISNYTNRDNPKYISSLGQTILNVSRLVPDGLLVFFPSYPMLNKCVDAWQASGLWADIASKKPIFLEPRGKDQFTSTMEEFYQAIRDSKGACFMAVCRGKVSEGLDFADRNGRAVIITGLPFPPLKDPKVILKRRYLESNRTRENQLLSGNEWYNLEATRAVNQAIGRVIRHRNDYGAILLCDSRFKDAAQVQQLSKWIRGHLGDRPQCSPFGPIVRELRQFFKNAETTMKQPDERESGAPLETVIKKEDEPLAPISQIKREPGSNATFKAANETAIKVEMANSIKSWSPDDYACAAGRKLGGSSAPNAMDFMSRLDSNVSSIDFNCMDSRNGSNSSGLVKIHKRERSSPPGSSQSSSQTAKKRYKLVENISTIKVEPPVEVKKEVPESRAAFLREIRSLVGQDQFRAFGQALLEYKDGSKDKFEALMKVVFEVLGGPRCRHLLVGMRKYIKADDKPEFDIRLAKLEKS</sequence>
<protein>
    <recommendedName>
        <fullName evidence="1">Regulator of telomere elongation helicase 1 homolog</fullName>
        <ecNumber evidence="1">5.6.2.-</ecNumber>
    </recommendedName>
</protein>
<feature type="chain" id="PRO_0000370620" description="Regulator of telomere elongation helicase 1 homolog">
    <location>
        <begin position="1"/>
        <end position="994"/>
    </location>
</feature>
<feature type="domain" description="Helicase ATP-binding" evidence="1">
    <location>
        <begin position="7"/>
        <end position="316"/>
    </location>
</feature>
<feature type="region of interest" description="Disordered" evidence="2">
    <location>
        <begin position="861"/>
        <end position="887"/>
    </location>
</feature>
<feature type="short sequence motif" description="DEAH box">
    <location>
        <begin position="252"/>
        <end position="255"/>
    </location>
</feature>
<feature type="compositionally biased region" description="Low complexity" evidence="2">
    <location>
        <begin position="874"/>
        <end position="884"/>
    </location>
</feature>
<feature type="binding site" evidence="1">
    <location>
        <begin position="42"/>
        <end position="49"/>
    </location>
    <ligand>
        <name>ATP</name>
        <dbReference type="ChEBI" id="CHEBI:30616"/>
    </ligand>
</feature>
<feature type="binding site" evidence="1">
    <location>
        <position position="146"/>
    </location>
    <ligand>
        <name>[4Fe-4S] cluster</name>
        <dbReference type="ChEBI" id="CHEBI:49883"/>
    </ligand>
</feature>
<feature type="binding site" evidence="1">
    <location>
        <position position="164"/>
    </location>
    <ligand>
        <name>[4Fe-4S] cluster</name>
        <dbReference type="ChEBI" id="CHEBI:49883"/>
    </ligand>
</feature>
<feature type="binding site" evidence="1">
    <location>
        <position position="173"/>
    </location>
    <ligand>
        <name>[4Fe-4S] cluster</name>
        <dbReference type="ChEBI" id="CHEBI:49883"/>
    </ligand>
</feature>
<feature type="binding site" evidence="1">
    <location>
        <position position="209"/>
    </location>
    <ligand>
        <name>[4Fe-4S] cluster</name>
        <dbReference type="ChEBI" id="CHEBI:49883"/>
    </ligand>
</feature>
<comment type="function">
    <text evidence="1">A probable ATP-dependent DNA helicase implicated in DNA repair and the maintenance of genomic stability. Acts as an anti-recombinase to counteract toxic recombination and limit crossover during meiosis. Regulates meiotic recombination and crossover homeostasis by physically dissociating strand invasion events and thereby promotes noncrossover repair by meiotic synthesis dependent strand annealing (SDSA) as well as disassembly of D loop recombination intermediates.</text>
</comment>
<comment type="catalytic activity">
    <reaction evidence="1">
        <text>ATP + H2O = ADP + phosphate + H(+)</text>
        <dbReference type="Rhea" id="RHEA:13065"/>
        <dbReference type="ChEBI" id="CHEBI:15377"/>
        <dbReference type="ChEBI" id="CHEBI:15378"/>
        <dbReference type="ChEBI" id="CHEBI:30616"/>
        <dbReference type="ChEBI" id="CHEBI:43474"/>
        <dbReference type="ChEBI" id="CHEBI:456216"/>
    </reaction>
</comment>
<comment type="subcellular location">
    <subcellularLocation>
        <location evidence="1">Nucleus</location>
    </subcellularLocation>
</comment>
<comment type="similarity">
    <text evidence="1">Belongs to the helicase family. RAD3/XPD subfamily.</text>
</comment>
<evidence type="ECO:0000255" key="1">
    <source>
        <dbReference type="HAMAP-Rule" id="MF_03065"/>
    </source>
</evidence>
<evidence type="ECO:0000256" key="2">
    <source>
        <dbReference type="SAM" id="MobiDB-lite"/>
    </source>
</evidence>
<reference key="1">
    <citation type="journal article" date="2007" name="Nature">
        <title>Evolution of genes and genomes on the Drosophila phylogeny.</title>
        <authorList>
            <consortium name="Drosophila 12 genomes consortium"/>
        </authorList>
    </citation>
    <scope>NUCLEOTIDE SEQUENCE [LARGE SCALE GENOMIC DNA]</scope>
    <source>
        <strain>Tucson 14024-0371.13</strain>
    </source>
</reference>
<organism>
    <name type="scientific">Drosophila ananassae</name>
    <name type="common">Fruit fly</name>
    <dbReference type="NCBI Taxonomy" id="7217"/>
    <lineage>
        <taxon>Eukaryota</taxon>
        <taxon>Metazoa</taxon>
        <taxon>Ecdysozoa</taxon>
        <taxon>Arthropoda</taxon>
        <taxon>Hexapoda</taxon>
        <taxon>Insecta</taxon>
        <taxon>Pterygota</taxon>
        <taxon>Neoptera</taxon>
        <taxon>Endopterygota</taxon>
        <taxon>Diptera</taxon>
        <taxon>Brachycera</taxon>
        <taxon>Muscomorpha</taxon>
        <taxon>Ephydroidea</taxon>
        <taxon>Drosophilidae</taxon>
        <taxon>Drosophila</taxon>
        <taxon>Sophophora</taxon>
    </lineage>
</organism>
<accession>B3MSG8</accession>
<dbReference type="EC" id="5.6.2.-" evidence="1"/>
<dbReference type="EMBL" id="CH902622">
    <property type="protein sequence ID" value="EDV34723.1"/>
    <property type="molecule type" value="Genomic_DNA"/>
</dbReference>
<dbReference type="SMR" id="B3MSG8"/>
<dbReference type="FunCoup" id="B3MSG8">
    <property type="interactions" value="1882"/>
</dbReference>
<dbReference type="STRING" id="7217.B3MSG8"/>
<dbReference type="EnsemblMetazoa" id="FBtr0125502">
    <property type="protein sequence ID" value="FBpp0123994"/>
    <property type="gene ID" value="FBgn0097808"/>
</dbReference>
<dbReference type="EnsemblMetazoa" id="XM_001964238.4">
    <property type="protein sequence ID" value="XP_001964274.1"/>
    <property type="gene ID" value="LOC6503494"/>
</dbReference>
<dbReference type="GeneID" id="6503494"/>
<dbReference type="KEGG" id="dan:6503494"/>
<dbReference type="CTD" id="51750"/>
<dbReference type="eggNOG" id="KOG1132">
    <property type="taxonomic scope" value="Eukaryota"/>
</dbReference>
<dbReference type="HOGENOM" id="CLU_006515_4_0_1"/>
<dbReference type="InParanoid" id="B3MSG8"/>
<dbReference type="OMA" id="NCATIVA"/>
<dbReference type="OrthoDB" id="19182at2759"/>
<dbReference type="PhylomeDB" id="B3MSG8"/>
<dbReference type="Proteomes" id="UP000007801">
    <property type="component" value="Unassembled WGS sequence"/>
</dbReference>
<dbReference type="GO" id="GO:0005634">
    <property type="term" value="C:nucleus"/>
    <property type="evidence" value="ECO:0000250"/>
    <property type="project" value="UniProtKB"/>
</dbReference>
<dbReference type="GO" id="GO:0051539">
    <property type="term" value="F:4 iron, 4 sulfur cluster binding"/>
    <property type="evidence" value="ECO:0007669"/>
    <property type="project" value="UniProtKB-UniRule"/>
</dbReference>
<dbReference type="GO" id="GO:0005524">
    <property type="term" value="F:ATP binding"/>
    <property type="evidence" value="ECO:0000250"/>
    <property type="project" value="UniProtKB"/>
</dbReference>
<dbReference type="GO" id="GO:0016887">
    <property type="term" value="F:ATP hydrolysis activity"/>
    <property type="evidence" value="ECO:0007669"/>
    <property type="project" value="RHEA"/>
</dbReference>
<dbReference type="GO" id="GO:0003682">
    <property type="term" value="F:chromatin binding"/>
    <property type="evidence" value="ECO:0007669"/>
    <property type="project" value="EnsemblMetazoa"/>
</dbReference>
<dbReference type="GO" id="GO:0003677">
    <property type="term" value="F:DNA binding"/>
    <property type="evidence" value="ECO:0007669"/>
    <property type="project" value="UniProtKB-UniRule"/>
</dbReference>
<dbReference type="GO" id="GO:0003678">
    <property type="term" value="F:DNA helicase activity"/>
    <property type="evidence" value="ECO:0000250"/>
    <property type="project" value="UniProtKB"/>
</dbReference>
<dbReference type="GO" id="GO:0070182">
    <property type="term" value="F:DNA polymerase binding"/>
    <property type="evidence" value="ECO:0007669"/>
    <property type="project" value="TreeGrafter"/>
</dbReference>
<dbReference type="GO" id="GO:0046872">
    <property type="term" value="F:metal ion binding"/>
    <property type="evidence" value="ECO:0007669"/>
    <property type="project" value="UniProtKB-UniRule"/>
</dbReference>
<dbReference type="GO" id="GO:0006310">
    <property type="term" value="P:DNA recombination"/>
    <property type="evidence" value="ECO:0007669"/>
    <property type="project" value="InterPro"/>
</dbReference>
<dbReference type="GO" id="GO:0006281">
    <property type="term" value="P:DNA repair"/>
    <property type="evidence" value="ECO:0007669"/>
    <property type="project" value="UniProtKB-UniRule"/>
</dbReference>
<dbReference type="GO" id="GO:0006260">
    <property type="term" value="P:DNA replication"/>
    <property type="evidence" value="ECO:0007669"/>
    <property type="project" value="InterPro"/>
</dbReference>
<dbReference type="GO" id="GO:0036098">
    <property type="term" value="P:male germ-line stem cell population maintenance"/>
    <property type="evidence" value="ECO:0007669"/>
    <property type="project" value="EnsemblMetazoa"/>
</dbReference>
<dbReference type="GO" id="GO:0045910">
    <property type="term" value="P:negative regulation of DNA recombination"/>
    <property type="evidence" value="ECO:0007669"/>
    <property type="project" value="TreeGrafter"/>
</dbReference>
<dbReference type="GO" id="GO:1904430">
    <property type="term" value="P:negative regulation of t-circle formation"/>
    <property type="evidence" value="ECO:0007669"/>
    <property type="project" value="TreeGrafter"/>
</dbReference>
<dbReference type="GO" id="GO:0010569">
    <property type="term" value="P:regulation of double-strand break repair via homologous recombination"/>
    <property type="evidence" value="ECO:0000250"/>
    <property type="project" value="UniProtKB"/>
</dbReference>
<dbReference type="GO" id="GO:0090657">
    <property type="term" value="P:telomeric loop disassembly"/>
    <property type="evidence" value="ECO:0007669"/>
    <property type="project" value="TreeGrafter"/>
</dbReference>
<dbReference type="CDD" id="cd17970">
    <property type="entry name" value="DEAHc_FancJ"/>
    <property type="match status" value="1"/>
</dbReference>
<dbReference type="CDD" id="cd13932">
    <property type="entry name" value="HN_RTEL1"/>
    <property type="match status" value="1"/>
</dbReference>
<dbReference type="CDD" id="cd18788">
    <property type="entry name" value="SF2_C_XPD"/>
    <property type="match status" value="1"/>
</dbReference>
<dbReference type="FunFam" id="3.40.50.300:FF:000431">
    <property type="entry name" value="Regulator of telomere elongation helicase 1"/>
    <property type="match status" value="1"/>
</dbReference>
<dbReference type="Gene3D" id="1.20.1160.20">
    <property type="match status" value="1"/>
</dbReference>
<dbReference type="Gene3D" id="3.40.50.300">
    <property type="entry name" value="P-loop containing nucleotide triphosphate hydrolases"/>
    <property type="match status" value="2"/>
</dbReference>
<dbReference type="HAMAP" id="MF_03065">
    <property type="entry name" value="RTEL1"/>
    <property type="match status" value="1"/>
</dbReference>
<dbReference type="InterPro" id="IPR006555">
    <property type="entry name" value="ATP-dep_Helicase_C"/>
</dbReference>
<dbReference type="InterPro" id="IPR045028">
    <property type="entry name" value="DinG/Rad3-like"/>
</dbReference>
<dbReference type="InterPro" id="IPR014013">
    <property type="entry name" value="Helic_SF1/SF2_ATP-bd_DinG/Rad3"/>
</dbReference>
<dbReference type="InterPro" id="IPR006554">
    <property type="entry name" value="Helicase-like_DEXD_c2"/>
</dbReference>
<dbReference type="InterPro" id="IPR049909">
    <property type="entry name" value="HHD_RTEL1"/>
</dbReference>
<dbReference type="InterPro" id="IPR027417">
    <property type="entry name" value="P-loop_NTPase"/>
</dbReference>
<dbReference type="InterPro" id="IPR010614">
    <property type="entry name" value="RAD3-like_helicase_DEAD"/>
</dbReference>
<dbReference type="InterPro" id="IPR013020">
    <property type="entry name" value="Rad3/Chl1-like"/>
</dbReference>
<dbReference type="InterPro" id="IPR030845">
    <property type="entry name" value="RTEL1"/>
</dbReference>
<dbReference type="NCBIfam" id="TIGR00604">
    <property type="entry name" value="rad3"/>
    <property type="match status" value="1"/>
</dbReference>
<dbReference type="PANTHER" id="PTHR11472">
    <property type="entry name" value="DNA REPAIR DEAD HELICASE RAD3/XP-D SUBFAMILY MEMBER"/>
    <property type="match status" value="1"/>
</dbReference>
<dbReference type="PANTHER" id="PTHR11472:SF34">
    <property type="entry name" value="REGULATOR OF TELOMERE ELONGATION HELICASE 1"/>
    <property type="match status" value="1"/>
</dbReference>
<dbReference type="Pfam" id="PF23109">
    <property type="entry name" value="ARCH_RTEL1"/>
    <property type="match status" value="1"/>
</dbReference>
<dbReference type="Pfam" id="PF06733">
    <property type="entry name" value="DEAD_2"/>
    <property type="match status" value="1"/>
</dbReference>
<dbReference type="Pfam" id="PF13307">
    <property type="entry name" value="Helicase_C_2"/>
    <property type="match status" value="1"/>
</dbReference>
<dbReference type="SMART" id="SM00488">
    <property type="entry name" value="DEXDc2"/>
    <property type="match status" value="1"/>
</dbReference>
<dbReference type="SMART" id="SM00491">
    <property type="entry name" value="HELICc2"/>
    <property type="match status" value="1"/>
</dbReference>
<dbReference type="SUPFAM" id="SSF52540">
    <property type="entry name" value="P-loop containing nucleoside triphosphate hydrolases"/>
    <property type="match status" value="2"/>
</dbReference>
<dbReference type="PROSITE" id="PS51193">
    <property type="entry name" value="HELICASE_ATP_BIND_2"/>
    <property type="match status" value="1"/>
</dbReference>